<proteinExistence type="evidence at protein level"/>
<accession>P07846</accession>
<sequence length="354" mass="37831">AKPAAENLSLVVHGPGDLRLENYPIPEPGPNEVLLKMHSVGICGSDVHYWQGRIGDFVVKKPMVLGHEASGTVVKVGSLVRHLQPGDRVAIQPGAPRQTDEFCKIGRYNLSPTIFFCATPPDDGNLCRFYKHNANFCYKLPDNVTFEEGALIEPLSVGIHACRRAGVTLGNKVLVCGAGPIGLVNLLAAKAMGAAQVVVTDLSASRLSKAKEVGADFILEISNESPEEIAKKVEGLLGSKPEVTIECTGVETSIQAGIYATHSGGTLVLVGLGSEMTSVPLVHAATREVDIKGVFRYCNTWPMAISMLASKSVNVKPLVTHRFPLEKALEAFETSKKGLGLKVMIKCDPSDQNP</sequence>
<gene>
    <name type="primary">SORD</name>
</gene>
<organism>
    <name type="scientific">Ovis aries</name>
    <name type="common">Sheep</name>
    <dbReference type="NCBI Taxonomy" id="9940"/>
    <lineage>
        <taxon>Eukaryota</taxon>
        <taxon>Metazoa</taxon>
        <taxon>Chordata</taxon>
        <taxon>Craniata</taxon>
        <taxon>Vertebrata</taxon>
        <taxon>Euteleostomi</taxon>
        <taxon>Mammalia</taxon>
        <taxon>Eutheria</taxon>
        <taxon>Laurasiatheria</taxon>
        <taxon>Artiodactyla</taxon>
        <taxon>Ruminantia</taxon>
        <taxon>Pecora</taxon>
        <taxon>Bovidae</taxon>
        <taxon>Caprinae</taxon>
        <taxon>Ovis</taxon>
    </lineage>
</organism>
<feature type="chain" id="PRO_0000160819" description="Sorbitol dehydrogenase">
    <location>
        <begin position="1"/>
        <end position="354"/>
    </location>
</feature>
<feature type="binding site" evidence="4">
    <location>
        <position position="43"/>
    </location>
    <ligand>
        <name>Zn(2+)</name>
        <dbReference type="ChEBI" id="CHEBI:29105"/>
        <note>catalytic</note>
    </ligand>
</feature>
<feature type="binding site" evidence="4">
    <location>
        <position position="49"/>
    </location>
    <ligand>
        <name>substrate</name>
    </ligand>
</feature>
<feature type="binding site" evidence="4">
    <location>
        <position position="67"/>
    </location>
    <ligand>
        <name>Zn(2+)</name>
        <dbReference type="ChEBI" id="CHEBI:29105"/>
        <note>catalytic</note>
    </ligand>
</feature>
<feature type="binding site" evidence="4">
    <location>
        <position position="68"/>
    </location>
    <ligand>
        <name>Zn(2+)</name>
        <dbReference type="ChEBI" id="CHEBI:29105"/>
        <note>catalytic</note>
    </ligand>
</feature>
<feature type="binding site" evidence="4">
    <location>
        <position position="153"/>
    </location>
    <ligand>
        <name>substrate</name>
    </ligand>
</feature>
<feature type="binding site" evidence="1">
    <location>
        <position position="181"/>
    </location>
    <ligand>
        <name>NAD(+)</name>
        <dbReference type="ChEBI" id="CHEBI:57540"/>
    </ligand>
</feature>
<feature type="binding site" evidence="1">
    <location>
        <position position="201"/>
    </location>
    <ligand>
        <name>NAD(+)</name>
        <dbReference type="ChEBI" id="CHEBI:57540"/>
    </ligand>
</feature>
<feature type="binding site" evidence="1">
    <location>
        <position position="206"/>
    </location>
    <ligand>
        <name>NAD(+)</name>
        <dbReference type="ChEBI" id="CHEBI:57540"/>
    </ligand>
</feature>
<feature type="binding site" evidence="1">
    <location>
        <begin position="270"/>
        <end position="272"/>
    </location>
    <ligand>
        <name>NAD(+)</name>
        <dbReference type="ChEBI" id="CHEBI:57540"/>
    </ligand>
</feature>
<feature type="binding site" evidence="1">
    <location>
        <begin position="294"/>
        <end position="296"/>
    </location>
    <ligand>
        <name>NAD(+)</name>
        <dbReference type="ChEBI" id="CHEBI:57540"/>
    </ligand>
</feature>
<feature type="binding site" evidence="4">
    <location>
        <position position="296"/>
    </location>
    <ligand>
        <name>substrate</name>
    </ligand>
</feature>
<feature type="binding site" evidence="4">
    <location>
        <position position="297"/>
    </location>
    <ligand>
        <name>substrate</name>
    </ligand>
</feature>
<feature type="modified residue" description="Phosphoserine" evidence="1">
    <location>
        <position position="208"/>
    </location>
</feature>
<feature type="modified residue" description="Phosphoserine" evidence="1">
    <location>
        <position position="222"/>
    </location>
</feature>
<feature type="strand" evidence="10">
    <location>
        <begin position="8"/>
        <end position="14"/>
    </location>
</feature>
<feature type="strand" evidence="10">
    <location>
        <begin position="17"/>
        <end position="22"/>
    </location>
</feature>
<feature type="strand" evidence="10">
    <location>
        <begin position="32"/>
        <end position="42"/>
    </location>
</feature>
<feature type="helix" evidence="10">
    <location>
        <begin position="44"/>
        <end position="51"/>
    </location>
</feature>
<feature type="strand" evidence="10">
    <location>
        <begin position="52"/>
        <end position="54"/>
    </location>
</feature>
<feature type="strand" evidence="10">
    <location>
        <begin position="68"/>
        <end position="76"/>
    </location>
</feature>
<feature type="strand" evidence="10">
    <location>
        <begin position="88"/>
        <end position="91"/>
    </location>
</feature>
<feature type="strand" evidence="10">
    <location>
        <begin position="93"/>
        <end position="95"/>
    </location>
</feature>
<feature type="helix" evidence="10">
    <location>
        <begin position="101"/>
        <end position="104"/>
    </location>
</feature>
<feature type="helix" evidence="10">
    <location>
        <begin position="108"/>
        <end position="110"/>
    </location>
</feature>
<feature type="strand" evidence="10">
    <location>
        <begin position="127"/>
        <end position="133"/>
    </location>
</feature>
<feature type="helix" evidence="10">
    <location>
        <begin position="134"/>
        <end position="136"/>
    </location>
</feature>
<feature type="strand" evidence="10">
    <location>
        <begin position="137"/>
        <end position="139"/>
    </location>
</feature>
<feature type="helix" evidence="10">
    <location>
        <begin position="146"/>
        <end position="165"/>
    </location>
</feature>
<feature type="strand" evidence="10">
    <location>
        <begin position="172"/>
        <end position="176"/>
    </location>
</feature>
<feature type="helix" evidence="10">
    <location>
        <begin position="180"/>
        <end position="191"/>
    </location>
</feature>
<feature type="strand" evidence="10">
    <location>
        <begin position="195"/>
        <end position="202"/>
    </location>
</feature>
<feature type="helix" evidence="10">
    <location>
        <begin position="204"/>
        <end position="213"/>
    </location>
</feature>
<feature type="strand" evidence="10">
    <location>
        <begin position="216"/>
        <end position="220"/>
    </location>
</feature>
<feature type="helix" evidence="10">
    <location>
        <begin position="226"/>
        <end position="237"/>
    </location>
</feature>
<feature type="strand" evidence="10">
    <location>
        <begin position="242"/>
        <end position="246"/>
    </location>
</feature>
<feature type="helix" evidence="10">
    <location>
        <begin position="251"/>
        <end position="260"/>
    </location>
</feature>
<feature type="strand" evidence="10">
    <location>
        <begin position="266"/>
        <end position="269"/>
    </location>
</feature>
<feature type="helix" evidence="10">
    <location>
        <begin position="281"/>
        <end position="286"/>
    </location>
</feature>
<feature type="strand" evidence="10">
    <location>
        <begin position="290"/>
        <end position="293"/>
    </location>
</feature>
<feature type="helix" evidence="10">
    <location>
        <begin position="301"/>
        <end position="309"/>
    </location>
</feature>
<feature type="helix" evidence="10">
    <location>
        <begin position="316"/>
        <end position="318"/>
    </location>
</feature>
<feature type="strand" evidence="10">
    <location>
        <begin position="319"/>
        <end position="324"/>
    </location>
</feature>
<feature type="helix" evidence="10">
    <location>
        <begin position="325"/>
        <end position="327"/>
    </location>
</feature>
<feature type="helix" evidence="10">
    <location>
        <begin position="328"/>
        <end position="337"/>
    </location>
</feature>
<feature type="strand" evidence="10">
    <location>
        <begin position="339"/>
        <end position="346"/>
    </location>
</feature>
<comment type="function">
    <text evidence="1 3">Polyol dehydrogenase that catalyzes the reversible NAD(+)-dependent oxidation of various sugar alcohols. Is mostly active with xylitol, L-iditol and D-sorbitol (D-glucitol) as substrates, leading to the C2-oxidized products D-xylulose, L-sorbose and D-fructose, respectively (PubMed:1459146). Is a key enzyme in the polyol pathway that interconverts glucose and fructose via sorbitol, which constitutes an important alternate route for glucose metabolism (By similarity). May play a role in sperm motility by using sorbitol as an alternative energy source for sperm motility (By similarity).</text>
</comment>
<comment type="catalytic activity">
    <reaction evidence="3">
        <text>xylitol + NAD(+) = D-xylulose + NADH + H(+)</text>
        <dbReference type="Rhea" id="RHEA:20433"/>
        <dbReference type="ChEBI" id="CHEBI:15378"/>
        <dbReference type="ChEBI" id="CHEBI:17140"/>
        <dbReference type="ChEBI" id="CHEBI:17151"/>
        <dbReference type="ChEBI" id="CHEBI:57540"/>
        <dbReference type="ChEBI" id="CHEBI:57945"/>
        <dbReference type="EC" id="1.1.1.9"/>
    </reaction>
</comment>
<comment type="catalytic activity">
    <reaction evidence="3">
        <text>L-iditol + NAD(+) = keto-L-sorbose + NADH + H(+)</text>
        <dbReference type="Rhea" id="RHEA:10160"/>
        <dbReference type="ChEBI" id="CHEBI:13172"/>
        <dbReference type="ChEBI" id="CHEBI:15378"/>
        <dbReference type="ChEBI" id="CHEBI:18202"/>
        <dbReference type="ChEBI" id="CHEBI:57540"/>
        <dbReference type="ChEBI" id="CHEBI:57945"/>
        <dbReference type="EC" id="1.1.1.14"/>
    </reaction>
</comment>
<comment type="catalytic activity">
    <reaction evidence="3">
        <text>keto-D-fructose + NADH + H(+) = D-sorbitol + NAD(+)</text>
        <dbReference type="Rhea" id="RHEA:33031"/>
        <dbReference type="ChEBI" id="CHEBI:15378"/>
        <dbReference type="ChEBI" id="CHEBI:17924"/>
        <dbReference type="ChEBI" id="CHEBI:48095"/>
        <dbReference type="ChEBI" id="CHEBI:57540"/>
        <dbReference type="ChEBI" id="CHEBI:57945"/>
    </reaction>
</comment>
<comment type="cofactor">
    <cofactor evidence="4">
        <name>Zn(2+)</name>
        <dbReference type="ChEBI" id="CHEBI:29105"/>
    </cofactor>
    <text evidence="4">Binds 1 zinc ion per subunit.</text>
</comment>
<comment type="biophysicochemical properties">
    <kinetics>
        <KM evidence="3">3.6 mM for D-sorbitol (at pH 7.4)</KM>
        <KM evidence="3">0.9 mM for xylitol (at pH 7.4)</KM>
        <KM evidence="3">3.3 mM for L-iditol (at pH 7.4)</KM>
        <KM evidence="3">51 mM for ribitol (at pH 7.4)</KM>
        <KM evidence="3">145 mM for D-mannitol (at pH 7.4)</KM>
        <KM evidence="3">680 mM for galactitol (at pH 7.4)</KM>
        <KM evidence="3">1.8 mM for D-sorbitol (at pH 9.9)</KM>
        <KM evidence="3">0.7 mM for xylitol (at pH 9.9)</KM>
        <KM evidence="3">2.5 mM for L-iditol (at pH 9.9)</KM>
        <KM evidence="3">5.6 mM for ribitol (at pH 9.9)</KM>
        <KM evidence="3">95 mM for D-mannitol (at pH 9.9)</KM>
        <KM evidence="3">285 mM for galactitol (at pH 9.9)</KM>
        <text evidence="3">kcat is 19.6 sec(-1) for D-sorbitol oxidation (at pH 7.4). kcat is 18.2 sec(-1) for xylitol oxidation (at pH 7.4). kcat is 20.4 sec(-1) for L-iditol oxidation (at pH 7.4). kcat is 20 sec(-1) for ribitol oxidation (at pH 7.4). kcat is 18.2 sec(-1) for D-mannitol oxidation (at pH 7.4). kcat is 20 sec(-1) for galactitol oxidation (at pH 7.4). kcat is 33 sec(-1) for D-sorbitol oxidation (at pH 9.9). kcat is 29.4 sec(-1) for xylitol oxidation (at pH 9.9). kcat is 35.5 sec(-1) for L-iditol oxidation (at pH 9.9). kcat is 29.4 sec(-1) for ribitol oxidation (at pH 9.9). kcat is 33 sec(-1) for D-mannitol oxidation (at pH 9.9). kcat is 28.6 sec(-1) for galactitol oxidation (at pH 9.9).</text>
    </kinetics>
</comment>
<comment type="subunit">
    <text evidence="4">Homotetramer.</text>
</comment>
<comment type="subcellular location">
    <subcellularLocation>
        <location evidence="2">Mitochondrion membrane</location>
        <topology evidence="2">Peripheral membrane protein</topology>
    </subcellularLocation>
    <subcellularLocation>
        <location evidence="2">Cell projection</location>
        <location evidence="2">Cilium</location>
        <location evidence="2">Flagellum</location>
    </subcellularLocation>
    <text evidence="2">Associated with mitochondria of the midpiece and near the plasma membrane in the principal piece of the flagellum. Also found in the epididymosome, secreted by the epididymal epithelium and that transfers proteins from the epididymal fluid to the sperm surface.</text>
</comment>
<comment type="tissue specificity">
    <text evidence="3 5">Expressed in liver.</text>
</comment>
<comment type="similarity">
    <text evidence="8">Belongs to the zinc-containing alcohol dehydrogenase family.</text>
</comment>
<protein>
    <recommendedName>
        <fullName evidence="6 7">Sorbitol dehydrogenase</fullName>
        <shortName evidence="6">SDH</shortName>
        <ecNumber evidence="3">1.1.1.-</ecNumber>
    </recommendedName>
    <alternativeName>
        <fullName evidence="9">L-iditol 2-dehydrogenase</fullName>
        <ecNumber evidence="3">1.1.1.14</ecNumber>
    </alternativeName>
    <alternativeName>
        <fullName evidence="8">Polyol dehydrogenase</fullName>
    </alternativeName>
    <alternativeName>
        <fullName evidence="9">Xylitol dehydrogenase</fullName>
        <shortName>XDH</shortName>
        <ecNumber evidence="3">1.1.1.9</ecNumber>
    </alternativeName>
</protein>
<reference key="1">
    <citation type="journal article" date="1984" name="Eur. J. Biochem.">
        <title>Sorbitol dehydrogenase. The primary structure of the sheep-liver enzyme.</title>
        <authorList>
            <person name="Jeffery J."/>
            <person name="Cederlund E."/>
            <person name="Joernvall H."/>
        </authorList>
    </citation>
    <scope>PROTEIN SEQUENCE</scope>
    <source>
        <tissue>Liver</tissue>
    </source>
</reference>
<reference key="2">
    <citation type="journal article" date="1984" name="Eur. J. Biochem.">
        <title>Extensive variations and basic features in the alcohol dehydrogenase-sorbitol dehydrogenase family.</title>
        <authorList>
            <person name="Joernvall H."/>
            <person name="von Bahr-Lindstroem H."/>
            <person name="Jeffery J."/>
        </authorList>
    </citation>
    <scope>SIMILARITY TO ZINC ALCOHOL DEHYDROGENASES</scope>
</reference>
<reference key="3">
    <citation type="journal article" date="1985" name="Biochemistry">
        <title>Molecular aspects of functional differences between alcohol and sorbitol dehydrogenases.</title>
        <authorList>
            <person name="Eklund H."/>
            <person name="Horjales E."/>
            <person name="Joernvall H."/>
            <person name="Branden C.I."/>
            <person name="Jeffery J."/>
        </authorList>
    </citation>
    <scope>3D-STRUCTURE MODELING</scope>
</reference>
<reference key="4">
    <citation type="journal article" date="1992" name="Eur. J. Biochem.">
        <title>The kinetic mechanism of sheep liver sorbitol dehydrogenase.</title>
        <authorList>
            <person name="Lindstad R.I."/>
            <person name="Hermansen L.F."/>
            <person name="McKinley-McKee J.S."/>
        </authorList>
    </citation>
    <scope>FUNCTION</scope>
    <scope>CATALYTIC ACTIVITY</scope>
    <scope>SUBSTRATE SPECIFICITY</scope>
    <scope>BIOPHYSICOCHEMICAL PROPERTIES</scope>
    <scope>TISSUE SPECIFICITY</scope>
</reference>
<reference key="5">
    <citation type="journal article" date="2011" name="Acta Crystallogr. D">
        <title>X-ray crystal structure and small-angle X-ray scattering of sheep liver sorbitol dehydrogenase.</title>
        <authorList>
            <person name="Yennawar H."/>
            <person name="Moller M."/>
            <person name="Gillilan R."/>
            <person name="Yennawar N."/>
        </authorList>
    </citation>
    <scope>X-RAY CRYSTALLOGRAPHY (1.9 ANGSTROMS) IN COMPLEX WITH SUBSTRATE ANALOG AND ZINC</scope>
    <scope>COFACTOR</scope>
    <scope>SUBUNIT</scope>
    <scope>ZINC-BINDING SITES</scope>
    <scope>SUBSTRATE-BINDING SITES</scope>
</reference>
<name>DHSO_SHEEP</name>
<keyword id="KW-0002">3D-structure</keyword>
<keyword id="KW-0966">Cell projection</keyword>
<keyword id="KW-0969">Cilium</keyword>
<keyword id="KW-0903">Direct protein sequencing</keyword>
<keyword id="KW-0282">Flagellum</keyword>
<keyword id="KW-0472">Membrane</keyword>
<keyword id="KW-0479">Metal-binding</keyword>
<keyword id="KW-0496">Mitochondrion</keyword>
<keyword id="KW-0520">NAD</keyword>
<keyword id="KW-0560">Oxidoreductase</keyword>
<keyword id="KW-0597">Phosphoprotein</keyword>
<keyword id="KW-1185">Reference proteome</keyword>
<keyword id="KW-0862">Zinc</keyword>
<evidence type="ECO:0000250" key="1">
    <source>
        <dbReference type="UniProtKB" id="Q00796"/>
    </source>
</evidence>
<evidence type="ECO:0000250" key="2">
    <source>
        <dbReference type="UniProtKB" id="Q64442"/>
    </source>
</evidence>
<evidence type="ECO:0000269" key="3">
    <source>
    </source>
</evidence>
<evidence type="ECO:0000269" key="4">
    <source>
    </source>
</evidence>
<evidence type="ECO:0000269" key="5">
    <source>
    </source>
</evidence>
<evidence type="ECO:0000303" key="6">
    <source>
    </source>
</evidence>
<evidence type="ECO:0000303" key="7">
    <source>
    </source>
</evidence>
<evidence type="ECO:0000305" key="8"/>
<evidence type="ECO:0000305" key="9">
    <source>
    </source>
</evidence>
<evidence type="ECO:0007829" key="10">
    <source>
        <dbReference type="PDB" id="3QE3"/>
    </source>
</evidence>
<dbReference type="EC" id="1.1.1.-" evidence="3"/>
<dbReference type="EC" id="1.1.1.14" evidence="3"/>
<dbReference type="EC" id="1.1.1.9" evidence="3"/>
<dbReference type="PIR" id="S10065">
    <property type="entry name" value="S10065"/>
</dbReference>
<dbReference type="PDB" id="3QE3">
    <property type="method" value="X-ray"/>
    <property type="resolution" value="1.90 A"/>
    <property type="chains" value="A=1-354"/>
</dbReference>
<dbReference type="PDBsum" id="3QE3"/>
<dbReference type="SMR" id="P07846"/>
<dbReference type="STRING" id="9940.ENSOARP00000022632"/>
<dbReference type="ChEMBL" id="CHEMBL1075154"/>
<dbReference type="PaxDb" id="9940-ENSOARP00000022632"/>
<dbReference type="eggNOG" id="KOG0024">
    <property type="taxonomic scope" value="Eukaryota"/>
</dbReference>
<dbReference type="SABIO-RK" id="P07846"/>
<dbReference type="EvolutionaryTrace" id="P07846"/>
<dbReference type="Proteomes" id="UP000002356">
    <property type="component" value="Unplaced"/>
</dbReference>
<dbReference type="GO" id="GO:0031966">
    <property type="term" value="C:mitochondrial membrane"/>
    <property type="evidence" value="ECO:0007669"/>
    <property type="project" value="UniProtKB-SubCell"/>
</dbReference>
<dbReference type="GO" id="GO:0031514">
    <property type="term" value="C:motile cilium"/>
    <property type="evidence" value="ECO:0000250"/>
    <property type="project" value="UniProtKB"/>
</dbReference>
<dbReference type="GO" id="GO:0032991">
    <property type="term" value="C:protein-containing complex"/>
    <property type="evidence" value="ECO:0000304"/>
    <property type="project" value="AgBase"/>
</dbReference>
<dbReference type="GO" id="GO:0046526">
    <property type="term" value="F:D-xylulose reductase activity"/>
    <property type="evidence" value="ECO:0007669"/>
    <property type="project" value="UniProtKB-EC"/>
</dbReference>
<dbReference type="GO" id="GO:0003939">
    <property type="term" value="F:L-iditol 2-dehydrogenase (NAD+) activity"/>
    <property type="evidence" value="ECO:0000314"/>
    <property type="project" value="UniProtKB"/>
</dbReference>
<dbReference type="GO" id="GO:0051287">
    <property type="term" value="F:NAD binding"/>
    <property type="evidence" value="ECO:0000304"/>
    <property type="project" value="AgBase"/>
</dbReference>
<dbReference type="GO" id="GO:0008270">
    <property type="term" value="F:zinc ion binding"/>
    <property type="evidence" value="ECO:0000314"/>
    <property type="project" value="UniProtKB"/>
</dbReference>
<dbReference type="GO" id="GO:0030317">
    <property type="term" value="P:flagellated sperm motility"/>
    <property type="evidence" value="ECO:0000250"/>
    <property type="project" value="UniProtKB"/>
</dbReference>
<dbReference type="GO" id="GO:0046370">
    <property type="term" value="P:fructose biosynthetic process"/>
    <property type="evidence" value="ECO:0000304"/>
    <property type="project" value="AgBase"/>
</dbReference>
<dbReference type="GO" id="GO:0006062">
    <property type="term" value="P:sorbitol catabolic process"/>
    <property type="evidence" value="ECO:0000304"/>
    <property type="project" value="AgBase"/>
</dbReference>
<dbReference type="CDD" id="cd05285">
    <property type="entry name" value="sorbitol_DH"/>
    <property type="match status" value="1"/>
</dbReference>
<dbReference type="FunFam" id="3.40.50.720:FF:000068">
    <property type="entry name" value="Sorbitol dehydrogenase"/>
    <property type="match status" value="1"/>
</dbReference>
<dbReference type="Gene3D" id="3.90.180.10">
    <property type="entry name" value="Medium-chain alcohol dehydrogenases, catalytic domain"/>
    <property type="match status" value="1"/>
</dbReference>
<dbReference type="Gene3D" id="3.40.50.720">
    <property type="entry name" value="NAD(P)-binding Rossmann-like Domain"/>
    <property type="match status" value="1"/>
</dbReference>
<dbReference type="InterPro" id="IPR013149">
    <property type="entry name" value="ADH-like_C"/>
</dbReference>
<dbReference type="InterPro" id="IPR013154">
    <property type="entry name" value="ADH-like_N"/>
</dbReference>
<dbReference type="InterPro" id="IPR002328">
    <property type="entry name" value="ADH_Zn_CS"/>
</dbReference>
<dbReference type="InterPro" id="IPR011032">
    <property type="entry name" value="GroES-like_sf"/>
</dbReference>
<dbReference type="InterPro" id="IPR036291">
    <property type="entry name" value="NAD(P)-bd_dom_sf"/>
</dbReference>
<dbReference type="InterPro" id="IPR020843">
    <property type="entry name" value="PKS_ER"/>
</dbReference>
<dbReference type="InterPro" id="IPR045306">
    <property type="entry name" value="SDH-like"/>
</dbReference>
<dbReference type="PANTHER" id="PTHR43161">
    <property type="entry name" value="SORBITOL DEHYDROGENASE"/>
    <property type="match status" value="1"/>
</dbReference>
<dbReference type="PANTHER" id="PTHR43161:SF9">
    <property type="entry name" value="SORBITOL DEHYDROGENASE"/>
    <property type="match status" value="1"/>
</dbReference>
<dbReference type="Pfam" id="PF08240">
    <property type="entry name" value="ADH_N"/>
    <property type="match status" value="1"/>
</dbReference>
<dbReference type="Pfam" id="PF00107">
    <property type="entry name" value="ADH_zinc_N"/>
    <property type="match status" value="1"/>
</dbReference>
<dbReference type="SMART" id="SM00829">
    <property type="entry name" value="PKS_ER"/>
    <property type="match status" value="1"/>
</dbReference>
<dbReference type="SUPFAM" id="SSF50129">
    <property type="entry name" value="GroES-like"/>
    <property type="match status" value="1"/>
</dbReference>
<dbReference type="SUPFAM" id="SSF51735">
    <property type="entry name" value="NAD(P)-binding Rossmann-fold domains"/>
    <property type="match status" value="1"/>
</dbReference>
<dbReference type="PROSITE" id="PS00059">
    <property type="entry name" value="ADH_ZINC"/>
    <property type="match status" value="1"/>
</dbReference>